<feature type="chain" id="PRO_0000382368" description="Glutamate-1-semialdehyde 2,1-aminomutase">
    <location>
        <begin position="1"/>
        <end position="429"/>
    </location>
</feature>
<feature type="modified residue" description="N6-(pyridoxal phosphate)lysine" evidence="1">
    <location>
        <position position="268"/>
    </location>
</feature>
<accession>A8G9U7</accession>
<reference key="1">
    <citation type="submission" date="2007-09" db="EMBL/GenBank/DDBJ databases">
        <title>Complete sequence of chromosome of Serratia proteamaculans 568.</title>
        <authorList>
            <consortium name="US DOE Joint Genome Institute"/>
            <person name="Copeland A."/>
            <person name="Lucas S."/>
            <person name="Lapidus A."/>
            <person name="Barry K."/>
            <person name="Glavina del Rio T."/>
            <person name="Dalin E."/>
            <person name="Tice H."/>
            <person name="Pitluck S."/>
            <person name="Chain P."/>
            <person name="Malfatti S."/>
            <person name="Shin M."/>
            <person name="Vergez L."/>
            <person name="Schmutz J."/>
            <person name="Larimer F."/>
            <person name="Land M."/>
            <person name="Hauser L."/>
            <person name="Kyrpides N."/>
            <person name="Kim E."/>
            <person name="Taghavi S."/>
            <person name="Newman L."/>
            <person name="Vangronsveld J."/>
            <person name="van der Lelie D."/>
            <person name="Richardson P."/>
        </authorList>
    </citation>
    <scope>NUCLEOTIDE SEQUENCE [LARGE SCALE GENOMIC DNA]</scope>
    <source>
        <strain>568</strain>
    </source>
</reference>
<gene>
    <name evidence="1" type="primary">hemL</name>
    <name type="ordered locus">Spro_0781</name>
</gene>
<sequence length="429" mass="45872">MSLHSKSESLYAQAKQVIPGGVNSPVRAFNGVGGVPLFIERADGAYLFDVDGKAYIDYVGSWGPMVLGHNHPAIRNAVIEAAQRGLSFGAPTEMEVKMAELVTELVPTMDMVRMVNSGTEATMSAIRLARGYTNRDKIIKFEGCYHGHADCLLVKAGSGALTLGQPNSPGVPADFAKHTLTCTFNDLDSVRTAFEQYPSEIACIIVEPVAGNMNCVPPLPEFLPGLRALCDKYGALLIIDEVMTGFRVALAGAQSYYDVVPDLTCLGKIIGGGMPVGAFGGRREVMAALAPTGPVYQAGTLSGNPIAMAAGFACLTEVSQVGVHQTLTELTDMLAAGLLHAAKEENVALVVNHVGGMFGLFFTDALSVTSYQDVMQCDVERFKRFFHLMLEEGVYLAPSAFEAGFMSIAHSKEDIQRTIDAARRCFAKL</sequence>
<keyword id="KW-0963">Cytoplasm</keyword>
<keyword id="KW-0413">Isomerase</keyword>
<keyword id="KW-0627">Porphyrin biosynthesis</keyword>
<keyword id="KW-0663">Pyridoxal phosphate</keyword>
<comment type="catalytic activity">
    <reaction evidence="1">
        <text>(S)-4-amino-5-oxopentanoate = 5-aminolevulinate</text>
        <dbReference type="Rhea" id="RHEA:14265"/>
        <dbReference type="ChEBI" id="CHEBI:57501"/>
        <dbReference type="ChEBI" id="CHEBI:356416"/>
        <dbReference type="EC" id="5.4.3.8"/>
    </reaction>
</comment>
<comment type="cofactor">
    <cofactor evidence="1">
        <name>pyridoxal 5'-phosphate</name>
        <dbReference type="ChEBI" id="CHEBI:597326"/>
    </cofactor>
</comment>
<comment type="pathway">
    <text evidence="1">Porphyrin-containing compound metabolism; protoporphyrin-IX biosynthesis; 5-aminolevulinate from L-glutamyl-tRNA(Glu): step 2/2.</text>
</comment>
<comment type="subunit">
    <text evidence="1">Homodimer.</text>
</comment>
<comment type="subcellular location">
    <subcellularLocation>
        <location evidence="1">Cytoplasm</location>
    </subcellularLocation>
</comment>
<comment type="similarity">
    <text evidence="1">Belongs to the class-III pyridoxal-phosphate-dependent aminotransferase family. HemL subfamily.</text>
</comment>
<name>GSA_SERP5</name>
<evidence type="ECO:0000255" key="1">
    <source>
        <dbReference type="HAMAP-Rule" id="MF_00375"/>
    </source>
</evidence>
<protein>
    <recommendedName>
        <fullName evidence="1">Glutamate-1-semialdehyde 2,1-aminomutase</fullName>
        <shortName evidence="1">GSA</shortName>
        <ecNumber evidence="1">5.4.3.8</ecNumber>
    </recommendedName>
    <alternativeName>
        <fullName evidence="1">Glutamate-1-semialdehyde aminotransferase</fullName>
        <shortName evidence="1">GSA-AT</shortName>
    </alternativeName>
</protein>
<proteinExistence type="inferred from homology"/>
<organism>
    <name type="scientific">Serratia proteamaculans (strain 568)</name>
    <dbReference type="NCBI Taxonomy" id="399741"/>
    <lineage>
        <taxon>Bacteria</taxon>
        <taxon>Pseudomonadati</taxon>
        <taxon>Pseudomonadota</taxon>
        <taxon>Gammaproteobacteria</taxon>
        <taxon>Enterobacterales</taxon>
        <taxon>Yersiniaceae</taxon>
        <taxon>Serratia</taxon>
    </lineage>
</organism>
<dbReference type="EC" id="5.4.3.8" evidence="1"/>
<dbReference type="EMBL" id="CP000826">
    <property type="protein sequence ID" value="ABV39887.1"/>
    <property type="molecule type" value="Genomic_DNA"/>
</dbReference>
<dbReference type="SMR" id="A8G9U7"/>
<dbReference type="STRING" id="399741.Spro_0781"/>
<dbReference type="KEGG" id="spe:Spro_0781"/>
<dbReference type="eggNOG" id="COG0001">
    <property type="taxonomic scope" value="Bacteria"/>
</dbReference>
<dbReference type="HOGENOM" id="CLU_016922_1_5_6"/>
<dbReference type="OrthoDB" id="9801052at2"/>
<dbReference type="UniPathway" id="UPA00251">
    <property type="reaction ID" value="UER00317"/>
</dbReference>
<dbReference type="GO" id="GO:0005737">
    <property type="term" value="C:cytoplasm"/>
    <property type="evidence" value="ECO:0007669"/>
    <property type="project" value="UniProtKB-SubCell"/>
</dbReference>
<dbReference type="GO" id="GO:0042286">
    <property type="term" value="F:glutamate-1-semialdehyde 2,1-aminomutase activity"/>
    <property type="evidence" value="ECO:0007669"/>
    <property type="project" value="UniProtKB-UniRule"/>
</dbReference>
<dbReference type="GO" id="GO:0030170">
    <property type="term" value="F:pyridoxal phosphate binding"/>
    <property type="evidence" value="ECO:0007669"/>
    <property type="project" value="InterPro"/>
</dbReference>
<dbReference type="GO" id="GO:0008483">
    <property type="term" value="F:transaminase activity"/>
    <property type="evidence" value="ECO:0007669"/>
    <property type="project" value="InterPro"/>
</dbReference>
<dbReference type="GO" id="GO:0006782">
    <property type="term" value="P:protoporphyrinogen IX biosynthetic process"/>
    <property type="evidence" value="ECO:0007669"/>
    <property type="project" value="UniProtKB-UniRule"/>
</dbReference>
<dbReference type="CDD" id="cd00610">
    <property type="entry name" value="OAT_like"/>
    <property type="match status" value="1"/>
</dbReference>
<dbReference type="FunFam" id="3.40.640.10:FF:000021">
    <property type="entry name" value="Glutamate-1-semialdehyde 2,1-aminomutase"/>
    <property type="match status" value="1"/>
</dbReference>
<dbReference type="FunFam" id="3.90.1150.10:FF:000012">
    <property type="entry name" value="Glutamate-1-semialdehyde 2,1-aminomutase"/>
    <property type="match status" value="1"/>
</dbReference>
<dbReference type="Gene3D" id="3.90.1150.10">
    <property type="entry name" value="Aspartate Aminotransferase, domain 1"/>
    <property type="match status" value="1"/>
</dbReference>
<dbReference type="Gene3D" id="3.40.640.10">
    <property type="entry name" value="Type I PLP-dependent aspartate aminotransferase-like (Major domain)"/>
    <property type="match status" value="1"/>
</dbReference>
<dbReference type="HAMAP" id="MF_00375">
    <property type="entry name" value="HemL_aminotrans_3"/>
    <property type="match status" value="1"/>
</dbReference>
<dbReference type="InterPro" id="IPR004639">
    <property type="entry name" value="4pyrrol_synth_GluAld_NH2Trfase"/>
</dbReference>
<dbReference type="InterPro" id="IPR005814">
    <property type="entry name" value="Aminotrans_3"/>
</dbReference>
<dbReference type="InterPro" id="IPR049704">
    <property type="entry name" value="Aminotrans_3_PPA_site"/>
</dbReference>
<dbReference type="InterPro" id="IPR015424">
    <property type="entry name" value="PyrdxlP-dep_Trfase"/>
</dbReference>
<dbReference type="InterPro" id="IPR015421">
    <property type="entry name" value="PyrdxlP-dep_Trfase_major"/>
</dbReference>
<dbReference type="InterPro" id="IPR015422">
    <property type="entry name" value="PyrdxlP-dep_Trfase_small"/>
</dbReference>
<dbReference type="NCBIfam" id="TIGR00713">
    <property type="entry name" value="hemL"/>
    <property type="match status" value="1"/>
</dbReference>
<dbReference type="NCBIfam" id="NF000818">
    <property type="entry name" value="PRK00062.1"/>
    <property type="match status" value="1"/>
</dbReference>
<dbReference type="PANTHER" id="PTHR43713">
    <property type="entry name" value="GLUTAMATE-1-SEMIALDEHYDE 2,1-AMINOMUTASE"/>
    <property type="match status" value="1"/>
</dbReference>
<dbReference type="PANTHER" id="PTHR43713:SF3">
    <property type="entry name" value="GLUTAMATE-1-SEMIALDEHYDE 2,1-AMINOMUTASE 1, CHLOROPLASTIC-RELATED"/>
    <property type="match status" value="1"/>
</dbReference>
<dbReference type="Pfam" id="PF00202">
    <property type="entry name" value="Aminotran_3"/>
    <property type="match status" value="1"/>
</dbReference>
<dbReference type="SUPFAM" id="SSF53383">
    <property type="entry name" value="PLP-dependent transferases"/>
    <property type="match status" value="1"/>
</dbReference>
<dbReference type="PROSITE" id="PS00600">
    <property type="entry name" value="AA_TRANSFER_CLASS_3"/>
    <property type="match status" value="1"/>
</dbReference>